<protein>
    <recommendedName>
        <fullName evidence="1">Phosphoglycerate kinase</fullName>
        <ecNumber evidence="1">2.7.2.3</ecNumber>
    </recommendedName>
</protein>
<organism>
    <name type="scientific">Caldanaerobacter subterraneus subsp. tengcongensis (strain DSM 15242 / JCM 11007 / NBRC 100824 / MB4)</name>
    <name type="common">Thermoanaerobacter tengcongensis</name>
    <dbReference type="NCBI Taxonomy" id="273068"/>
    <lineage>
        <taxon>Bacteria</taxon>
        <taxon>Bacillati</taxon>
        <taxon>Bacillota</taxon>
        <taxon>Clostridia</taxon>
        <taxon>Thermoanaerobacterales</taxon>
        <taxon>Thermoanaerobacteraceae</taxon>
        <taxon>Caldanaerobacter</taxon>
    </lineage>
</organism>
<accession>Q8R965</accession>
<proteinExistence type="inferred from homology"/>
<dbReference type="EC" id="2.7.2.3" evidence="1"/>
<dbReference type="EMBL" id="AE008691">
    <property type="protein sequence ID" value="AAM24955.1"/>
    <property type="molecule type" value="Genomic_DNA"/>
</dbReference>
<dbReference type="RefSeq" id="WP_011025957.1">
    <property type="nucleotide sequence ID" value="NC_003869.1"/>
</dbReference>
<dbReference type="SMR" id="Q8R965"/>
<dbReference type="STRING" id="273068.TTE1761"/>
<dbReference type="KEGG" id="tte:TTE1761"/>
<dbReference type="eggNOG" id="COG0126">
    <property type="taxonomic scope" value="Bacteria"/>
</dbReference>
<dbReference type="HOGENOM" id="CLU_025427_0_2_9"/>
<dbReference type="OrthoDB" id="9808460at2"/>
<dbReference type="UniPathway" id="UPA00109">
    <property type="reaction ID" value="UER00185"/>
</dbReference>
<dbReference type="Proteomes" id="UP000000555">
    <property type="component" value="Chromosome"/>
</dbReference>
<dbReference type="GO" id="GO:0005829">
    <property type="term" value="C:cytosol"/>
    <property type="evidence" value="ECO:0007669"/>
    <property type="project" value="TreeGrafter"/>
</dbReference>
<dbReference type="GO" id="GO:0043531">
    <property type="term" value="F:ADP binding"/>
    <property type="evidence" value="ECO:0007669"/>
    <property type="project" value="TreeGrafter"/>
</dbReference>
<dbReference type="GO" id="GO:0005524">
    <property type="term" value="F:ATP binding"/>
    <property type="evidence" value="ECO:0007669"/>
    <property type="project" value="UniProtKB-KW"/>
</dbReference>
<dbReference type="GO" id="GO:0004618">
    <property type="term" value="F:phosphoglycerate kinase activity"/>
    <property type="evidence" value="ECO:0007669"/>
    <property type="project" value="UniProtKB-UniRule"/>
</dbReference>
<dbReference type="GO" id="GO:0006094">
    <property type="term" value="P:gluconeogenesis"/>
    <property type="evidence" value="ECO:0007669"/>
    <property type="project" value="TreeGrafter"/>
</dbReference>
<dbReference type="GO" id="GO:0006096">
    <property type="term" value="P:glycolytic process"/>
    <property type="evidence" value="ECO:0007669"/>
    <property type="project" value="UniProtKB-UniRule"/>
</dbReference>
<dbReference type="CDD" id="cd00318">
    <property type="entry name" value="Phosphoglycerate_kinase"/>
    <property type="match status" value="1"/>
</dbReference>
<dbReference type="FunFam" id="3.40.50.1260:FF:000007">
    <property type="entry name" value="Phosphoglycerate kinase"/>
    <property type="match status" value="1"/>
</dbReference>
<dbReference type="FunFam" id="3.40.50.1260:FF:000011">
    <property type="entry name" value="Phosphoglycerate kinase"/>
    <property type="match status" value="1"/>
</dbReference>
<dbReference type="Gene3D" id="3.40.50.1260">
    <property type="entry name" value="Phosphoglycerate kinase, N-terminal domain"/>
    <property type="match status" value="2"/>
</dbReference>
<dbReference type="HAMAP" id="MF_00145">
    <property type="entry name" value="Phosphoglyc_kinase"/>
    <property type="match status" value="1"/>
</dbReference>
<dbReference type="InterPro" id="IPR001576">
    <property type="entry name" value="Phosphoglycerate_kinase"/>
</dbReference>
<dbReference type="InterPro" id="IPR015911">
    <property type="entry name" value="Phosphoglycerate_kinase_CS"/>
</dbReference>
<dbReference type="InterPro" id="IPR015824">
    <property type="entry name" value="Phosphoglycerate_kinase_N"/>
</dbReference>
<dbReference type="InterPro" id="IPR036043">
    <property type="entry name" value="Phosphoglycerate_kinase_sf"/>
</dbReference>
<dbReference type="PANTHER" id="PTHR11406">
    <property type="entry name" value="PHOSPHOGLYCERATE KINASE"/>
    <property type="match status" value="1"/>
</dbReference>
<dbReference type="PANTHER" id="PTHR11406:SF23">
    <property type="entry name" value="PHOSPHOGLYCERATE KINASE 1, CHLOROPLASTIC-RELATED"/>
    <property type="match status" value="1"/>
</dbReference>
<dbReference type="Pfam" id="PF00162">
    <property type="entry name" value="PGK"/>
    <property type="match status" value="1"/>
</dbReference>
<dbReference type="PIRSF" id="PIRSF000724">
    <property type="entry name" value="Pgk"/>
    <property type="match status" value="1"/>
</dbReference>
<dbReference type="PRINTS" id="PR00477">
    <property type="entry name" value="PHGLYCKINASE"/>
</dbReference>
<dbReference type="SUPFAM" id="SSF53748">
    <property type="entry name" value="Phosphoglycerate kinase"/>
    <property type="match status" value="1"/>
</dbReference>
<dbReference type="PROSITE" id="PS00111">
    <property type="entry name" value="PGLYCERATE_KINASE"/>
    <property type="match status" value="1"/>
</dbReference>
<comment type="catalytic activity">
    <reaction evidence="1">
        <text>(2R)-3-phosphoglycerate + ATP = (2R)-3-phospho-glyceroyl phosphate + ADP</text>
        <dbReference type="Rhea" id="RHEA:14801"/>
        <dbReference type="ChEBI" id="CHEBI:30616"/>
        <dbReference type="ChEBI" id="CHEBI:57604"/>
        <dbReference type="ChEBI" id="CHEBI:58272"/>
        <dbReference type="ChEBI" id="CHEBI:456216"/>
        <dbReference type="EC" id="2.7.2.3"/>
    </reaction>
</comment>
<comment type="pathway">
    <text evidence="1">Carbohydrate degradation; glycolysis; pyruvate from D-glyceraldehyde 3-phosphate: step 2/5.</text>
</comment>
<comment type="subunit">
    <text evidence="1">Monomer.</text>
</comment>
<comment type="subcellular location">
    <subcellularLocation>
        <location evidence="1">Cytoplasm</location>
    </subcellularLocation>
</comment>
<comment type="similarity">
    <text evidence="1">Belongs to the phosphoglycerate kinase family.</text>
</comment>
<name>PGK_CALS4</name>
<feature type="chain" id="PRO_0000146028" description="Phosphoglycerate kinase">
    <location>
        <begin position="1"/>
        <end position="394"/>
    </location>
</feature>
<feature type="binding site" evidence="1">
    <location>
        <begin position="21"/>
        <end position="23"/>
    </location>
    <ligand>
        <name>substrate</name>
    </ligand>
</feature>
<feature type="binding site" evidence="1">
    <location>
        <position position="37"/>
    </location>
    <ligand>
        <name>substrate</name>
    </ligand>
</feature>
<feature type="binding site" evidence="1">
    <location>
        <begin position="60"/>
        <end position="63"/>
    </location>
    <ligand>
        <name>substrate</name>
    </ligand>
</feature>
<feature type="binding site" evidence="1">
    <location>
        <position position="119"/>
    </location>
    <ligand>
        <name>substrate</name>
    </ligand>
</feature>
<feature type="binding site" evidence="1">
    <location>
        <position position="152"/>
    </location>
    <ligand>
        <name>substrate</name>
    </ligand>
</feature>
<feature type="binding site" evidence="1">
    <location>
        <position position="202"/>
    </location>
    <ligand>
        <name>ATP</name>
        <dbReference type="ChEBI" id="CHEBI:30616"/>
    </ligand>
</feature>
<feature type="binding site" evidence="1">
    <location>
        <position position="293"/>
    </location>
    <ligand>
        <name>ATP</name>
        <dbReference type="ChEBI" id="CHEBI:30616"/>
    </ligand>
</feature>
<feature type="binding site" evidence="1">
    <location>
        <position position="324"/>
    </location>
    <ligand>
        <name>ATP</name>
        <dbReference type="ChEBI" id="CHEBI:30616"/>
    </ligand>
</feature>
<feature type="binding site" evidence="1">
    <location>
        <begin position="350"/>
        <end position="353"/>
    </location>
    <ligand>
        <name>ATP</name>
        <dbReference type="ChEBI" id="CHEBI:30616"/>
    </ligand>
</feature>
<reference key="1">
    <citation type="journal article" date="2002" name="Genome Res.">
        <title>A complete sequence of the T. tengcongensis genome.</title>
        <authorList>
            <person name="Bao Q."/>
            <person name="Tian Y."/>
            <person name="Li W."/>
            <person name="Xu Z."/>
            <person name="Xuan Z."/>
            <person name="Hu S."/>
            <person name="Dong W."/>
            <person name="Yang J."/>
            <person name="Chen Y."/>
            <person name="Xue Y."/>
            <person name="Xu Y."/>
            <person name="Lai X."/>
            <person name="Huang L."/>
            <person name="Dong X."/>
            <person name="Ma Y."/>
            <person name="Ling L."/>
            <person name="Tan H."/>
            <person name="Chen R."/>
            <person name="Wang J."/>
            <person name="Yu J."/>
            <person name="Yang H."/>
        </authorList>
    </citation>
    <scope>NUCLEOTIDE SEQUENCE [LARGE SCALE GENOMIC DNA]</scope>
    <source>
        <strain>DSM 15242 / JCM 11007 / NBRC 100824 / MB4</strain>
    </source>
</reference>
<sequence length="394" mass="42817">MKKKTVRDIDVSGKRVLVRVDFNVPMDENKNITDDRRIREALPTIEYLINHNAKVILVSHLGRPKGKFNPDYSLKPVAKRLSELLKKPVIMAEDVIGEDAKVKAAALKEGEVLLLENVRFHAEEEKNDPEFAKELASLADIYVNDAFGTAHRAHASTAGVAKYLPAVAGFLIEKELSIMGEALENPKRPFVAILGGAKVSDKIGVITNLLEKVDSLLIGGGMAYTFIKAKGYEIGKSLLEEDKIELAKEIMEKAKQKGVNFMLPVDTVIAKELKSGVPYEVVDIDKMPEDQIGVDIGPKTIEEYSKVIKHAMTVVWNGPMGVFEIPEFAKGTKAIAKALSECKGTTIVGGGDSAAAIEQLGYADKVTHISTGGGASLEFLEGKVLPGIDILNDK</sequence>
<evidence type="ECO:0000255" key="1">
    <source>
        <dbReference type="HAMAP-Rule" id="MF_00145"/>
    </source>
</evidence>
<keyword id="KW-0067">ATP-binding</keyword>
<keyword id="KW-0963">Cytoplasm</keyword>
<keyword id="KW-0324">Glycolysis</keyword>
<keyword id="KW-0418">Kinase</keyword>
<keyword id="KW-0547">Nucleotide-binding</keyword>
<keyword id="KW-1185">Reference proteome</keyword>
<keyword id="KW-0808">Transferase</keyword>
<gene>
    <name evidence="1" type="primary">pgk</name>
    <name type="ordered locus">TTE1761</name>
</gene>